<sequence>MSKRLPPLNALRVFDAAARHLSFTRAAEELFVTQAAVSHQIKSLEDFLGLKLFRRRNRSLLLTEEGQSYFLDIKEIFSQLTEATRKLQARSAKGALTVSLLPSFAIHWLVPRLSSFNSAYPGIDVRIQAVDRQEDKLADDVDVAIFYGRGNWPGLRVEKLYAEYLLPVCSPLLLTGEKPLKTPEDLAKHTLLHDASRRDWQTYTRQLGLNHINVQQGPIFSHSAMVLQAAIHGQGVALANNVMAQSEIEAGRLVCPFNDVLVSKNAFYLVCHDSQAELGKIAAFRQWILAKAAAEQEKFRFRYEQ</sequence>
<feature type="chain" id="PRO_0000105625" description="Glycine cleavage system transcriptional activator">
    <location>
        <begin position="1"/>
        <end position="305"/>
    </location>
</feature>
<feature type="domain" description="HTH lysR-type" evidence="1">
    <location>
        <begin position="6"/>
        <end position="63"/>
    </location>
</feature>
<feature type="DNA-binding region" description="H-T-H motif" evidence="1">
    <location>
        <begin position="23"/>
        <end position="42"/>
    </location>
</feature>
<keyword id="KW-0002">3D-structure</keyword>
<keyword id="KW-0010">Activator</keyword>
<keyword id="KW-0963">Cytoplasm</keyword>
<keyword id="KW-0238">DNA-binding</keyword>
<keyword id="KW-1185">Reference proteome</keyword>
<keyword id="KW-0678">Repressor</keyword>
<keyword id="KW-0804">Transcription</keyword>
<keyword id="KW-0805">Transcription regulation</keyword>
<proteinExistence type="evidence at protein level"/>
<gene>
    <name type="primary">gcvA</name>
    <name type="ordered locus">b2808</name>
    <name type="ordered locus">JW2779</name>
</gene>
<protein>
    <recommendedName>
        <fullName>Glycine cleavage system transcriptional activator</fullName>
    </recommendedName>
    <alternativeName>
        <fullName>Gcv operon activator</fullName>
    </alternativeName>
</protein>
<name>GCVA_ECOLI</name>
<evidence type="ECO:0000255" key="1">
    <source>
        <dbReference type="PROSITE-ProRule" id="PRU00253"/>
    </source>
</evidence>
<evidence type="ECO:0000305" key="2"/>
<comment type="function">
    <text>Regulatory protein for the glycine cleavage system operon (gcv). Mediates activation of gcv by glycine and repression by purines. GcvA is negatively autoregulated. Binds to three sites upstream of the gcv promoter.</text>
</comment>
<comment type="subcellular location">
    <subcellularLocation>
        <location>Cytoplasm</location>
    </subcellularLocation>
</comment>
<comment type="similarity">
    <text evidence="2">Belongs to the LysR transcriptional regulatory family.</text>
</comment>
<organism>
    <name type="scientific">Escherichia coli (strain K12)</name>
    <dbReference type="NCBI Taxonomy" id="83333"/>
    <lineage>
        <taxon>Bacteria</taxon>
        <taxon>Pseudomonadati</taxon>
        <taxon>Pseudomonadota</taxon>
        <taxon>Gammaproteobacteria</taxon>
        <taxon>Enterobacterales</taxon>
        <taxon>Enterobacteriaceae</taxon>
        <taxon>Escherichia</taxon>
    </lineage>
</organism>
<dbReference type="EMBL" id="U01030">
    <property type="protein sequence ID" value="AAC13742.1"/>
    <property type="molecule type" value="Genomic_DNA"/>
</dbReference>
<dbReference type="EMBL" id="X73413">
    <property type="protein sequence ID" value="CAA51813.1"/>
    <property type="molecule type" value="Genomic_DNA"/>
</dbReference>
<dbReference type="EMBL" id="U29581">
    <property type="protein sequence ID" value="AAB40458.1"/>
    <property type="molecule type" value="Genomic_DNA"/>
</dbReference>
<dbReference type="EMBL" id="U00096">
    <property type="protein sequence ID" value="AAC75850.1"/>
    <property type="molecule type" value="Genomic_DNA"/>
</dbReference>
<dbReference type="EMBL" id="AP009048">
    <property type="protein sequence ID" value="BAE76880.1"/>
    <property type="molecule type" value="Genomic_DNA"/>
</dbReference>
<dbReference type="PIR" id="I41065">
    <property type="entry name" value="I41065"/>
</dbReference>
<dbReference type="RefSeq" id="NP_417288.1">
    <property type="nucleotide sequence ID" value="NC_000913.3"/>
</dbReference>
<dbReference type="RefSeq" id="WP_000044401.1">
    <property type="nucleotide sequence ID" value="NZ_STEB01000030.1"/>
</dbReference>
<dbReference type="PDB" id="8Y6U">
    <property type="method" value="EM"/>
    <property type="resolution" value="3.97 A"/>
    <property type="chains" value="H/J=1-305"/>
</dbReference>
<dbReference type="PDBsum" id="8Y6U"/>
<dbReference type="EMDB" id="EMD-39001"/>
<dbReference type="SMR" id="P0A9F6"/>
<dbReference type="BioGRID" id="4261124">
    <property type="interactions" value="141"/>
</dbReference>
<dbReference type="BioGRID" id="851607">
    <property type="interactions" value="1"/>
</dbReference>
<dbReference type="DIP" id="DIP-9751N"/>
<dbReference type="FunCoup" id="P0A9F6">
    <property type="interactions" value="40"/>
</dbReference>
<dbReference type="IntAct" id="P0A9F6">
    <property type="interactions" value="2"/>
</dbReference>
<dbReference type="STRING" id="511145.b2808"/>
<dbReference type="jPOST" id="P0A9F6"/>
<dbReference type="PaxDb" id="511145-b2808"/>
<dbReference type="EnsemblBacteria" id="AAC75850">
    <property type="protein sequence ID" value="AAC75850"/>
    <property type="gene ID" value="b2808"/>
</dbReference>
<dbReference type="GeneID" id="93779190"/>
<dbReference type="GeneID" id="947278"/>
<dbReference type="KEGG" id="ecj:JW2779"/>
<dbReference type="KEGG" id="eco:b2808"/>
<dbReference type="KEGG" id="ecoc:C3026_15435"/>
<dbReference type="PATRIC" id="fig|1411691.4.peg.3925"/>
<dbReference type="EchoBASE" id="EB1743"/>
<dbReference type="eggNOG" id="COG0583">
    <property type="taxonomic scope" value="Bacteria"/>
</dbReference>
<dbReference type="HOGENOM" id="CLU_039613_37_1_6"/>
<dbReference type="InParanoid" id="P0A9F6"/>
<dbReference type="OMA" id="IPVCAPS"/>
<dbReference type="OrthoDB" id="5526340at2"/>
<dbReference type="PhylomeDB" id="P0A9F6"/>
<dbReference type="BioCyc" id="EcoCyc:PD00339"/>
<dbReference type="PRO" id="PR:P0A9F6"/>
<dbReference type="Proteomes" id="UP000000625">
    <property type="component" value="Chromosome"/>
</dbReference>
<dbReference type="GO" id="GO:0005737">
    <property type="term" value="C:cytoplasm"/>
    <property type="evidence" value="ECO:0007669"/>
    <property type="project" value="UniProtKB-SubCell"/>
</dbReference>
<dbReference type="GO" id="GO:0003700">
    <property type="term" value="F:DNA-binding transcription factor activity"/>
    <property type="evidence" value="ECO:0000314"/>
    <property type="project" value="EcoCyc"/>
</dbReference>
<dbReference type="GO" id="GO:0043565">
    <property type="term" value="F:sequence-specific DNA binding"/>
    <property type="evidence" value="ECO:0000318"/>
    <property type="project" value="GO_Central"/>
</dbReference>
<dbReference type="GO" id="GO:0006351">
    <property type="term" value="P:DNA-templated transcription"/>
    <property type="evidence" value="ECO:0000314"/>
    <property type="project" value="EcoCyc"/>
</dbReference>
<dbReference type="GO" id="GO:0006355">
    <property type="term" value="P:regulation of DNA-templated transcription"/>
    <property type="evidence" value="ECO:0000314"/>
    <property type="project" value="EcoliWiki"/>
</dbReference>
<dbReference type="GO" id="GO:0009411">
    <property type="term" value="P:response to UV"/>
    <property type="evidence" value="ECO:0000315"/>
    <property type="project" value="EcoCyc"/>
</dbReference>
<dbReference type="CDD" id="cd08432">
    <property type="entry name" value="PBP2_GcdR_TrpI_HvrB_AmpR_like"/>
    <property type="match status" value="1"/>
</dbReference>
<dbReference type="FunFam" id="1.10.10.10:FF:000038">
    <property type="entry name" value="Glycine cleavage system transcriptional activator"/>
    <property type="match status" value="1"/>
</dbReference>
<dbReference type="FunFam" id="3.40.190.10:FF:000017">
    <property type="entry name" value="Glycine cleavage system transcriptional activator"/>
    <property type="match status" value="1"/>
</dbReference>
<dbReference type="Gene3D" id="3.40.190.10">
    <property type="entry name" value="Periplasmic binding protein-like II"/>
    <property type="match status" value="2"/>
</dbReference>
<dbReference type="Gene3D" id="1.10.10.10">
    <property type="entry name" value="Winged helix-like DNA-binding domain superfamily/Winged helix DNA-binding domain"/>
    <property type="match status" value="1"/>
</dbReference>
<dbReference type="InterPro" id="IPR005119">
    <property type="entry name" value="LysR_subst-bd"/>
</dbReference>
<dbReference type="InterPro" id="IPR000847">
    <property type="entry name" value="Tscrpt_reg_HTH_LysR"/>
</dbReference>
<dbReference type="InterPro" id="IPR036388">
    <property type="entry name" value="WH-like_DNA-bd_sf"/>
</dbReference>
<dbReference type="InterPro" id="IPR036390">
    <property type="entry name" value="WH_DNA-bd_sf"/>
</dbReference>
<dbReference type="NCBIfam" id="NF008352">
    <property type="entry name" value="PRK11139.1"/>
    <property type="match status" value="1"/>
</dbReference>
<dbReference type="PANTHER" id="PTHR30537:SF26">
    <property type="entry name" value="GLYCINE CLEAVAGE SYSTEM TRANSCRIPTIONAL ACTIVATOR"/>
    <property type="match status" value="1"/>
</dbReference>
<dbReference type="PANTHER" id="PTHR30537">
    <property type="entry name" value="HTH-TYPE TRANSCRIPTIONAL REGULATOR"/>
    <property type="match status" value="1"/>
</dbReference>
<dbReference type="Pfam" id="PF00126">
    <property type="entry name" value="HTH_1"/>
    <property type="match status" value="1"/>
</dbReference>
<dbReference type="Pfam" id="PF03466">
    <property type="entry name" value="LysR_substrate"/>
    <property type="match status" value="1"/>
</dbReference>
<dbReference type="PRINTS" id="PR00039">
    <property type="entry name" value="HTHLYSR"/>
</dbReference>
<dbReference type="SUPFAM" id="SSF53850">
    <property type="entry name" value="Periplasmic binding protein-like II"/>
    <property type="match status" value="1"/>
</dbReference>
<dbReference type="SUPFAM" id="SSF46785">
    <property type="entry name" value="Winged helix' DNA-binding domain"/>
    <property type="match status" value="1"/>
</dbReference>
<dbReference type="PROSITE" id="PS50931">
    <property type="entry name" value="HTH_LYSR"/>
    <property type="match status" value="1"/>
</dbReference>
<accession>P0A9F6</accession>
<accession>P32064</accession>
<accession>Q2MA26</accession>
<reference key="1">
    <citation type="journal article" date="1994" name="J. Bacteriol.">
        <title>DNA sequence and characterization of GcvA, a LysR family regulatory protein for the Escherichia coli glycine cleavage enzyme system.</title>
        <authorList>
            <person name="Wilson R.L."/>
            <person name="Stauffer G.V."/>
        </authorList>
    </citation>
    <scope>NUCLEOTIDE SEQUENCE [GENOMIC DNA]</scope>
    <scope>CHARACTERIZATION</scope>
    <source>
        <strain>K12</strain>
    </source>
</reference>
<reference key="2">
    <citation type="journal article" date="1995" name="Microbiology">
        <title>GcvA, a LysR-type transcriptional regulator protein, activates expression of the cloned Citrobacter freundii ampC beta-lactamase gene in Escherichia coli: cross-talk between DNA-binding proteins.</title>
        <authorList>
            <person name="Everett M.J."/>
            <person name="Walsh T."/>
            <person name="Guay G."/>
            <person name="Bennett P.M."/>
        </authorList>
    </citation>
    <scope>NUCLEOTIDE SEQUENCE [GENOMIC DNA]</scope>
    <source>
        <strain>K12</strain>
    </source>
</reference>
<reference key="3">
    <citation type="journal article" date="1997" name="Science">
        <title>The complete genome sequence of Escherichia coli K-12.</title>
        <authorList>
            <person name="Blattner F.R."/>
            <person name="Plunkett G. III"/>
            <person name="Bloch C.A."/>
            <person name="Perna N.T."/>
            <person name="Burland V."/>
            <person name="Riley M."/>
            <person name="Collado-Vides J."/>
            <person name="Glasner J.D."/>
            <person name="Rode C.K."/>
            <person name="Mayhew G.F."/>
            <person name="Gregor J."/>
            <person name="Davis N.W."/>
            <person name="Kirkpatrick H.A."/>
            <person name="Goeden M.A."/>
            <person name="Rose D.J."/>
            <person name="Mau B."/>
            <person name="Shao Y."/>
        </authorList>
    </citation>
    <scope>NUCLEOTIDE SEQUENCE [LARGE SCALE GENOMIC DNA]</scope>
    <source>
        <strain>K12 / MG1655 / ATCC 47076</strain>
    </source>
</reference>
<reference key="4">
    <citation type="journal article" date="2006" name="Mol. Syst. Biol.">
        <title>Highly accurate genome sequences of Escherichia coli K-12 strains MG1655 and W3110.</title>
        <authorList>
            <person name="Hayashi K."/>
            <person name="Morooka N."/>
            <person name="Yamamoto Y."/>
            <person name="Fujita K."/>
            <person name="Isono K."/>
            <person name="Choi S."/>
            <person name="Ohtsubo E."/>
            <person name="Baba T."/>
            <person name="Wanner B.L."/>
            <person name="Mori H."/>
            <person name="Horiuchi T."/>
        </authorList>
    </citation>
    <scope>NUCLEOTIDE SEQUENCE [LARGE SCALE GENOMIC DNA]</scope>
    <source>
        <strain>K12 / W3110 / ATCC 27325 / DSM 5911</strain>
    </source>
</reference>